<protein>
    <recommendedName>
        <fullName evidence="1">UPF0259 membrane protein BUAP5A_271</fullName>
    </recommendedName>
</protein>
<reference key="1">
    <citation type="journal article" date="2009" name="Science">
        <title>The dynamics and time scale of ongoing genomic erosion in symbiotic bacteria.</title>
        <authorList>
            <person name="Moran N.A."/>
            <person name="McLaughlin H.J."/>
            <person name="Sorek R."/>
        </authorList>
    </citation>
    <scope>NUCLEOTIDE SEQUENCE [LARGE SCALE GENOMIC DNA]</scope>
    <source>
        <strain>5A</strain>
    </source>
</reference>
<dbReference type="EMBL" id="CP001161">
    <property type="protein sequence ID" value="ACL30640.1"/>
    <property type="molecule type" value="Genomic_DNA"/>
</dbReference>
<dbReference type="RefSeq" id="WP_009874230.1">
    <property type="nucleotide sequence ID" value="NC_011833.1"/>
</dbReference>
<dbReference type="KEGG" id="bap:BUAP5A_271"/>
<dbReference type="HOGENOM" id="CLU_073287_0_0_6"/>
<dbReference type="OrthoDB" id="6554514at2"/>
<dbReference type="Proteomes" id="UP000006904">
    <property type="component" value="Chromosome"/>
</dbReference>
<dbReference type="GO" id="GO:0005886">
    <property type="term" value="C:plasma membrane"/>
    <property type="evidence" value="ECO:0007669"/>
    <property type="project" value="UniProtKB-SubCell"/>
</dbReference>
<dbReference type="HAMAP" id="MF_01067">
    <property type="entry name" value="UPF0259"/>
    <property type="match status" value="1"/>
</dbReference>
<dbReference type="InterPro" id="IPR009627">
    <property type="entry name" value="UPF0259"/>
</dbReference>
<dbReference type="NCBIfam" id="NF002774">
    <property type="entry name" value="PRK02868.1"/>
    <property type="match status" value="1"/>
</dbReference>
<dbReference type="Pfam" id="PF06790">
    <property type="entry name" value="UPF0259"/>
    <property type="match status" value="1"/>
</dbReference>
<proteinExistence type="inferred from homology"/>
<name>Y271_BUCA5</name>
<sequence>MPITVNKLRHDTHHFFYKKIGAIFFISIFATFMNILIDMFIKPDMHIVSIMENNKFINASSLLEFIQNMNLNEKHELLKYSILKIMESLISKTTLLGSIIILISVVSEPKKKSIVSSIRTFFLFFPSLFILNFLTTFIIQIGFMLLIIPGILLSIILSLSPIILFFKKNRLLDSIRLSMYISWKYIKIIGPGVLFWMCGKFILTMLLAHFSLINKNVLFLISNISMNILFSILIIYLFRFYMIFLRS</sequence>
<gene>
    <name type="ordered locus">BUAP5A_271</name>
</gene>
<evidence type="ECO:0000255" key="1">
    <source>
        <dbReference type="HAMAP-Rule" id="MF_01067"/>
    </source>
</evidence>
<organism>
    <name type="scientific">Buchnera aphidicola subsp. Acyrthosiphon pisum (strain 5A)</name>
    <dbReference type="NCBI Taxonomy" id="563178"/>
    <lineage>
        <taxon>Bacteria</taxon>
        <taxon>Pseudomonadati</taxon>
        <taxon>Pseudomonadota</taxon>
        <taxon>Gammaproteobacteria</taxon>
        <taxon>Enterobacterales</taxon>
        <taxon>Erwiniaceae</taxon>
        <taxon>Buchnera</taxon>
    </lineage>
</organism>
<keyword id="KW-1003">Cell membrane</keyword>
<keyword id="KW-0472">Membrane</keyword>
<keyword id="KW-0812">Transmembrane</keyword>
<keyword id="KW-1133">Transmembrane helix</keyword>
<accession>B8D969</accession>
<comment type="subcellular location">
    <subcellularLocation>
        <location evidence="1">Cell membrane</location>
        <topology evidence="1">Multi-pass membrane protein</topology>
    </subcellularLocation>
</comment>
<comment type="similarity">
    <text evidence="1">Belongs to the UPF0259 family.</text>
</comment>
<feature type="chain" id="PRO_1000149739" description="UPF0259 membrane protein BUAP5A_271">
    <location>
        <begin position="1"/>
        <end position="247"/>
    </location>
</feature>
<feature type="transmembrane region" description="Helical" evidence="1">
    <location>
        <begin position="20"/>
        <end position="40"/>
    </location>
</feature>
<feature type="transmembrane region" description="Helical" evidence="1">
    <location>
        <begin position="85"/>
        <end position="105"/>
    </location>
</feature>
<feature type="transmembrane region" description="Helical" evidence="1">
    <location>
        <begin position="114"/>
        <end position="134"/>
    </location>
</feature>
<feature type="transmembrane region" description="Helical" evidence="1">
    <location>
        <begin position="137"/>
        <end position="157"/>
    </location>
</feature>
<feature type="transmembrane region" description="Helical" evidence="1">
    <location>
        <begin position="188"/>
        <end position="208"/>
    </location>
</feature>
<feature type="transmembrane region" description="Helical" evidence="1">
    <location>
        <begin position="218"/>
        <end position="238"/>
    </location>
</feature>